<feature type="initiator methionine" description="Removed" evidence="3">
    <location>
        <position position="1"/>
    </location>
</feature>
<feature type="chain" id="PRO_0000363353" description="Calcium-dependent protein kinase 32">
    <location>
        <begin position="2"/>
        <end position="538"/>
    </location>
</feature>
<feature type="domain" description="Protein kinase" evidence="4">
    <location>
        <begin position="63"/>
        <end position="321"/>
    </location>
</feature>
<feature type="domain" description="EF-hand 1" evidence="5">
    <location>
        <begin position="364"/>
        <end position="399"/>
    </location>
</feature>
<feature type="domain" description="EF-hand 2" evidence="5">
    <location>
        <begin position="400"/>
        <end position="435"/>
    </location>
</feature>
<feature type="domain" description="EF-hand 3" evidence="5">
    <location>
        <begin position="436"/>
        <end position="470"/>
    </location>
</feature>
<feature type="domain" description="EF-hand 4" evidence="5">
    <location>
        <begin position="471"/>
        <end position="506"/>
    </location>
</feature>
<feature type="region of interest" description="Disordered" evidence="7">
    <location>
        <begin position="1"/>
        <end position="37"/>
    </location>
</feature>
<feature type="region of interest" description="Autoinhibitory domain" evidence="1">
    <location>
        <begin position="327"/>
        <end position="357"/>
    </location>
</feature>
<feature type="active site" description="Proton acceptor" evidence="4 6">
    <location>
        <position position="187"/>
    </location>
</feature>
<feature type="binding site" evidence="4">
    <location>
        <begin position="69"/>
        <end position="77"/>
    </location>
    <ligand>
        <name>ATP</name>
        <dbReference type="ChEBI" id="CHEBI:30616"/>
    </ligand>
</feature>
<feature type="binding site" evidence="4">
    <location>
        <position position="92"/>
    </location>
    <ligand>
        <name>ATP</name>
        <dbReference type="ChEBI" id="CHEBI:30616"/>
    </ligand>
</feature>
<feature type="binding site" evidence="13">
    <location>
        <position position="377"/>
    </location>
    <ligand>
        <name>Ca(2+)</name>
        <dbReference type="ChEBI" id="CHEBI:29108"/>
        <label>1</label>
    </ligand>
</feature>
<feature type="binding site" evidence="13">
    <location>
        <position position="379"/>
    </location>
    <ligand>
        <name>Ca(2+)</name>
        <dbReference type="ChEBI" id="CHEBI:29108"/>
        <label>1</label>
    </ligand>
</feature>
<feature type="binding site" evidence="13">
    <location>
        <position position="383"/>
    </location>
    <ligand>
        <name>Ca(2+)</name>
        <dbReference type="ChEBI" id="CHEBI:29108"/>
        <label>1</label>
    </ligand>
</feature>
<feature type="binding site" evidence="13">
    <location>
        <position position="388"/>
    </location>
    <ligand>
        <name>Ca(2+)</name>
        <dbReference type="ChEBI" id="CHEBI:29108"/>
        <label>1</label>
    </ligand>
</feature>
<feature type="binding site" evidence="5">
    <location>
        <position position="413"/>
    </location>
    <ligand>
        <name>Ca(2+)</name>
        <dbReference type="ChEBI" id="CHEBI:29108"/>
        <label>2</label>
    </ligand>
</feature>
<feature type="binding site" evidence="5">
    <location>
        <position position="415"/>
    </location>
    <ligand>
        <name>Ca(2+)</name>
        <dbReference type="ChEBI" id="CHEBI:29108"/>
        <label>2</label>
    </ligand>
</feature>
<feature type="binding site" evidence="5">
    <location>
        <position position="417"/>
    </location>
    <ligand>
        <name>Ca(2+)</name>
        <dbReference type="ChEBI" id="CHEBI:29108"/>
        <label>2</label>
    </ligand>
</feature>
<feature type="binding site" evidence="5">
    <location>
        <position position="419"/>
    </location>
    <ligand>
        <name>Ca(2+)</name>
        <dbReference type="ChEBI" id="CHEBI:29108"/>
        <label>2</label>
    </ligand>
</feature>
<feature type="binding site" evidence="5">
    <location>
        <position position="424"/>
    </location>
    <ligand>
        <name>Ca(2+)</name>
        <dbReference type="ChEBI" id="CHEBI:29108"/>
        <label>2</label>
    </ligand>
</feature>
<feature type="binding site" evidence="5">
    <location>
        <position position="449"/>
    </location>
    <ligand>
        <name>Ca(2+)</name>
        <dbReference type="ChEBI" id="CHEBI:29108"/>
        <label>3</label>
    </ligand>
</feature>
<feature type="binding site" evidence="5">
    <location>
        <position position="451"/>
    </location>
    <ligand>
        <name>Ca(2+)</name>
        <dbReference type="ChEBI" id="CHEBI:29108"/>
        <label>3</label>
    </ligand>
</feature>
<feature type="binding site" evidence="5">
    <location>
        <position position="453"/>
    </location>
    <ligand>
        <name>Ca(2+)</name>
        <dbReference type="ChEBI" id="CHEBI:29108"/>
        <label>3</label>
    </ligand>
</feature>
<feature type="binding site" evidence="5">
    <location>
        <position position="455"/>
    </location>
    <ligand>
        <name>Ca(2+)</name>
        <dbReference type="ChEBI" id="CHEBI:29108"/>
        <label>3</label>
    </ligand>
</feature>
<feature type="binding site" evidence="5">
    <location>
        <position position="460"/>
    </location>
    <ligand>
        <name>Ca(2+)</name>
        <dbReference type="ChEBI" id="CHEBI:29108"/>
        <label>3</label>
    </ligand>
</feature>
<feature type="binding site" evidence="5">
    <location>
        <position position="484"/>
    </location>
    <ligand>
        <name>Ca(2+)</name>
        <dbReference type="ChEBI" id="CHEBI:29108"/>
        <label>4</label>
    </ligand>
</feature>
<feature type="binding site" evidence="5">
    <location>
        <position position="486"/>
    </location>
    <ligand>
        <name>Ca(2+)</name>
        <dbReference type="ChEBI" id="CHEBI:29108"/>
        <label>4</label>
    </ligand>
</feature>
<feature type="binding site" evidence="5">
    <location>
        <position position="488"/>
    </location>
    <ligand>
        <name>Ca(2+)</name>
        <dbReference type="ChEBI" id="CHEBI:29108"/>
        <label>4</label>
    </ligand>
</feature>
<feature type="binding site" evidence="5">
    <location>
        <position position="490"/>
    </location>
    <ligand>
        <name>Ca(2+)</name>
        <dbReference type="ChEBI" id="CHEBI:29108"/>
        <label>4</label>
    </ligand>
</feature>
<feature type="binding site" evidence="5">
    <location>
        <position position="495"/>
    </location>
    <ligand>
        <name>Ca(2+)</name>
        <dbReference type="ChEBI" id="CHEBI:29108"/>
        <label>4</label>
    </ligand>
</feature>
<feature type="modified residue" description="Phosphoserine" evidence="2">
    <location>
        <position position="227"/>
    </location>
</feature>
<feature type="modified residue" description="Phosphoserine" evidence="2">
    <location>
        <position position="492"/>
    </location>
</feature>
<feature type="lipid moiety-binding region" description="N-myristoyl glycine" evidence="3">
    <location>
        <position position="2"/>
    </location>
</feature>
<feature type="splice variant" id="VSP_036298" description="In isoform 2." evidence="11">
    <original>IAEHLSDEEASGIREGFQIMDTSQRGKINIDE</original>
    <variation>KYILLINYPKMYISSDLKSLTIVSFGLVTLSR</variation>
    <location>
        <begin position="357"/>
        <end position="388"/>
    </location>
</feature>
<feature type="splice variant" id="VSP_036299" description="In isoform 2." evidence="11">
    <location>
        <begin position="389"/>
        <end position="538"/>
    </location>
</feature>
<sequence length="538" mass="60935">MGNCCGTAGSLAQNDNKPKKGRKKQNPFSIDYGLHHGGGDGGGRPLKLIVLNDPTGREIESKYTLGRELGRGEFGVTYLCTDKETDDVFACKSILKKKLRTAVDIEDVRREVEIMRHMPEHPNVVTLKETYEDEHAVHLVMELCEGGELFDRIVARGHYTERAAAAVTKTIMEVVQVCHKHGVMHRDLKPENFLFGNKKETAPLKAIDFGLSVFFKPGERFNEIVGSPYYMAPEVLKRNYGPEVDIWSAGVILYILLCGVPPFWAETEQGVAQAIIRSVLDFRRDPWPKVSENAKDLIRKMLDPDQKRRLTAQQVLDHPWLQNAKTAPNVSLGETVRARLKQFTVMNKLKKRALRVIAEHLSDEEASGIREGFQIMDTSQRGKINIDELKIGLQKLGHAIPQDDLQILMDAGDIDRDGYLDCDEFIAISVHLRKMGNDEHLKKAFAFFDQNNNGYIEIEELREALSDELGTSEEVVDAIIRDVDTDKDGRISYEEFVTMMKTGTDWRKASRQYSRERFNSISLKLMQDASLQVNGDTR</sequence>
<name>CDPKW_ARATH</name>
<protein>
    <recommendedName>
        <fullName evidence="12">Calcium-dependent protein kinase 32</fullName>
        <ecNumber evidence="13">2.7.11.1</ecNumber>
    </recommendedName>
</protein>
<comment type="function">
    <text evidence="8 10">May play a role in signal transduction pathways that involve calcium as a second messenger. Involved in maintaining Ca2+ homeostasis in pollen tube tips by regulating CNGC18 (PubMed:24121288). Functions as regulator of the calcium-mediated abscisic acid (ABA) signaling pathway (PubMed:16299177). Phosphorylates ABA-responsive transcription factor ABF4 in vitro (PubMed:16299177).</text>
</comment>
<comment type="catalytic activity">
    <reaction evidence="13">
        <text>L-seryl-[protein] + ATP = O-phospho-L-seryl-[protein] + ADP + H(+)</text>
        <dbReference type="Rhea" id="RHEA:17989"/>
        <dbReference type="Rhea" id="RHEA-COMP:9863"/>
        <dbReference type="Rhea" id="RHEA-COMP:11604"/>
        <dbReference type="ChEBI" id="CHEBI:15378"/>
        <dbReference type="ChEBI" id="CHEBI:29999"/>
        <dbReference type="ChEBI" id="CHEBI:30616"/>
        <dbReference type="ChEBI" id="CHEBI:83421"/>
        <dbReference type="ChEBI" id="CHEBI:456216"/>
        <dbReference type="EC" id="2.7.11.1"/>
    </reaction>
</comment>
<comment type="catalytic activity">
    <reaction evidence="13">
        <text>L-threonyl-[protein] + ATP = O-phospho-L-threonyl-[protein] + ADP + H(+)</text>
        <dbReference type="Rhea" id="RHEA:46608"/>
        <dbReference type="Rhea" id="RHEA-COMP:11060"/>
        <dbReference type="Rhea" id="RHEA-COMP:11605"/>
        <dbReference type="ChEBI" id="CHEBI:15378"/>
        <dbReference type="ChEBI" id="CHEBI:30013"/>
        <dbReference type="ChEBI" id="CHEBI:30616"/>
        <dbReference type="ChEBI" id="CHEBI:61977"/>
        <dbReference type="ChEBI" id="CHEBI:456216"/>
        <dbReference type="EC" id="2.7.11.1"/>
    </reaction>
</comment>
<comment type="activity regulation">
    <text evidence="1">Activated by calcium. Autophosphorylation may play an important role in the regulation of the kinase activity (By similarity).</text>
</comment>
<comment type="subunit">
    <text evidence="8 10">Interacts with ABF4 (PubMed:16299177). Interacts with CNGC18 (PubMed:24121288).</text>
</comment>
<comment type="interaction">
    <interactant intactId="EBI-1538032">
        <id>Q6NLQ6</id>
    </interactant>
    <interactant intactId="EBI-1237867">
        <id>Q9M7Q2</id>
        <label>ABF4</label>
    </interactant>
    <organismsDiffer>false</organismsDiffer>
    <experiments>4</experiments>
</comment>
<comment type="subcellular location">
    <subcellularLocation>
        <location evidence="8">Nucleus</location>
    </subcellularLocation>
    <subcellularLocation>
        <location evidence="14">Membrane</location>
        <topology evidence="14">Lipid-anchor</topology>
    </subcellularLocation>
</comment>
<comment type="alternative products">
    <event type="alternative splicing"/>
    <isoform>
        <id>Q6NLQ6-1</id>
        <name>1</name>
        <sequence type="displayed"/>
    </isoform>
    <isoform>
        <id>Q6NLQ6-2</id>
        <name>2</name>
        <sequence type="described" ref="VSP_036298 VSP_036299"/>
    </isoform>
</comment>
<comment type="tissue specificity">
    <text evidence="8">Expressed in embryos and most of the vegetative tissues.</text>
</comment>
<comment type="induction">
    <text evidence="8 9">Induced by touch, wounding, and darkness exposure. Also induced by high-salt treatment.</text>
</comment>
<comment type="domain">
    <text evidence="1">There are 3 contiguous domains conserved in the CDPK subfamily: a kinase domain, an autoinhibitory (junction) domain and a calmodulin-like domain. The autoinhibitory domain (327-357) inactivates kinase activity under calcium-free conditions (By similarity).</text>
</comment>
<comment type="miscellaneous">
    <molecule>Isoform 2</molecule>
    <text evidence="13">May be due to intron retention.</text>
</comment>
<comment type="similarity">
    <text evidence="4">Belongs to the protein kinase superfamily. Ser/Thr protein kinase family. CDPK subfamily.</text>
</comment>
<comment type="sequence caution" evidence="13">
    <conflict type="erroneous gene model prediction">
        <sequence resource="EMBL-CDS" id="CAB66110"/>
    </conflict>
</comment>
<keyword id="KW-0025">Alternative splicing</keyword>
<keyword id="KW-0067">ATP-binding</keyword>
<keyword id="KW-0106">Calcium</keyword>
<keyword id="KW-0418">Kinase</keyword>
<keyword id="KW-0449">Lipoprotein</keyword>
<keyword id="KW-0472">Membrane</keyword>
<keyword id="KW-0479">Metal-binding</keyword>
<keyword id="KW-0519">Myristate</keyword>
<keyword id="KW-0547">Nucleotide-binding</keyword>
<keyword id="KW-0539">Nucleus</keyword>
<keyword id="KW-0597">Phosphoprotein</keyword>
<keyword id="KW-1185">Reference proteome</keyword>
<keyword id="KW-0677">Repeat</keyword>
<keyword id="KW-0723">Serine/threonine-protein kinase</keyword>
<keyword id="KW-0808">Transferase</keyword>
<evidence type="ECO:0000250" key="1"/>
<evidence type="ECO:0000250" key="2">
    <source>
        <dbReference type="UniProtKB" id="Q9FKW4"/>
    </source>
</evidence>
<evidence type="ECO:0000255" key="3"/>
<evidence type="ECO:0000255" key="4">
    <source>
        <dbReference type="PROSITE-ProRule" id="PRU00159"/>
    </source>
</evidence>
<evidence type="ECO:0000255" key="5">
    <source>
        <dbReference type="PROSITE-ProRule" id="PRU00448"/>
    </source>
</evidence>
<evidence type="ECO:0000255" key="6">
    <source>
        <dbReference type="PROSITE-ProRule" id="PRU10027"/>
    </source>
</evidence>
<evidence type="ECO:0000256" key="7">
    <source>
        <dbReference type="SAM" id="MobiDB-lite"/>
    </source>
</evidence>
<evidence type="ECO:0000269" key="8">
    <source>
    </source>
</evidence>
<evidence type="ECO:0000269" key="9">
    <source>
    </source>
</evidence>
<evidence type="ECO:0000269" key="10">
    <source>
    </source>
</evidence>
<evidence type="ECO:0000303" key="11">
    <source ref="4"/>
</evidence>
<evidence type="ECO:0000303" key="12">
    <source ref="5"/>
</evidence>
<evidence type="ECO:0000305" key="13"/>
<evidence type="ECO:0000305" key="14">
    <source>
    </source>
</evidence>
<evidence type="ECO:0000312" key="15">
    <source>
        <dbReference type="Araport" id="AT3G57530"/>
    </source>
</evidence>
<evidence type="ECO:0000312" key="16">
    <source>
        <dbReference type="EMBL" id="CAB66110.1"/>
    </source>
</evidence>
<reference key="1">
    <citation type="journal article" date="2000" name="Nature">
        <title>Sequence and analysis of chromosome 3 of the plant Arabidopsis thaliana.</title>
        <authorList>
            <person name="Salanoubat M."/>
            <person name="Lemcke K."/>
            <person name="Rieger M."/>
            <person name="Ansorge W."/>
            <person name="Unseld M."/>
            <person name="Fartmann B."/>
            <person name="Valle G."/>
            <person name="Bloecker H."/>
            <person name="Perez-Alonso M."/>
            <person name="Obermaier B."/>
            <person name="Delseny M."/>
            <person name="Boutry M."/>
            <person name="Grivell L.A."/>
            <person name="Mache R."/>
            <person name="Puigdomenech P."/>
            <person name="De Simone V."/>
            <person name="Choisne N."/>
            <person name="Artiguenave F."/>
            <person name="Robert C."/>
            <person name="Brottier P."/>
            <person name="Wincker P."/>
            <person name="Cattolico L."/>
            <person name="Weissenbach J."/>
            <person name="Saurin W."/>
            <person name="Quetier F."/>
            <person name="Schaefer M."/>
            <person name="Mueller-Auer S."/>
            <person name="Gabel C."/>
            <person name="Fuchs M."/>
            <person name="Benes V."/>
            <person name="Wurmbach E."/>
            <person name="Drzonek H."/>
            <person name="Erfle H."/>
            <person name="Jordan N."/>
            <person name="Bangert S."/>
            <person name="Wiedelmann R."/>
            <person name="Kranz H."/>
            <person name="Voss H."/>
            <person name="Holland R."/>
            <person name="Brandt P."/>
            <person name="Nyakatura G."/>
            <person name="Vezzi A."/>
            <person name="D'Angelo M."/>
            <person name="Pallavicini A."/>
            <person name="Toppo S."/>
            <person name="Simionati B."/>
            <person name="Conrad A."/>
            <person name="Hornischer K."/>
            <person name="Kauer G."/>
            <person name="Loehnert T.-H."/>
            <person name="Nordsiek G."/>
            <person name="Reichelt J."/>
            <person name="Scharfe M."/>
            <person name="Schoen O."/>
            <person name="Bargues M."/>
            <person name="Terol J."/>
            <person name="Climent J."/>
            <person name="Navarro P."/>
            <person name="Collado C."/>
            <person name="Perez-Perez A."/>
            <person name="Ottenwaelder B."/>
            <person name="Duchemin D."/>
            <person name="Cooke R."/>
            <person name="Laudie M."/>
            <person name="Berger-Llauro C."/>
            <person name="Purnelle B."/>
            <person name="Masuy D."/>
            <person name="de Haan M."/>
            <person name="Maarse A.C."/>
            <person name="Alcaraz J.-P."/>
            <person name="Cottet A."/>
            <person name="Casacuberta E."/>
            <person name="Monfort A."/>
            <person name="Argiriou A."/>
            <person name="Flores M."/>
            <person name="Liguori R."/>
            <person name="Vitale D."/>
            <person name="Mannhaupt G."/>
            <person name="Haase D."/>
            <person name="Schoof H."/>
            <person name="Rudd S."/>
            <person name="Zaccaria P."/>
            <person name="Mewes H.-W."/>
            <person name="Mayer K.F.X."/>
            <person name="Kaul S."/>
            <person name="Town C.D."/>
            <person name="Koo H.L."/>
            <person name="Tallon L.J."/>
            <person name="Jenkins J."/>
            <person name="Rooney T."/>
            <person name="Rizzo M."/>
            <person name="Walts A."/>
            <person name="Utterback T."/>
            <person name="Fujii C.Y."/>
            <person name="Shea T.P."/>
            <person name="Creasy T.H."/>
            <person name="Haas B."/>
            <person name="Maiti R."/>
            <person name="Wu D."/>
            <person name="Peterson J."/>
            <person name="Van Aken S."/>
            <person name="Pai G."/>
            <person name="Militscher J."/>
            <person name="Sellers P."/>
            <person name="Gill J.E."/>
            <person name="Feldblyum T.V."/>
            <person name="Preuss D."/>
            <person name="Lin X."/>
            <person name="Nierman W.C."/>
            <person name="Salzberg S.L."/>
            <person name="White O."/>
            <person name="Venter J.C."/>
            <person name="Fraser C.M."/>
            <person name="Kaneko T."/>
            <person name="Nakamura Y."/>
            <person name="Sato S."/>
            <person name="Kato T."/>
            <person name="Asamizu E."/>
            <person name="Sasamoto S."/>
            <person name="Kimura T."/>
            <person name="Idesawa K."/>
            <person name="Kawashima K."/>
            <person name="Kishida Y."/>
            <person name="Kiyokawa C."/>
            <person name="Kohara M."/>
            <person name="Matsumoto M."/>
            <person name="Matsuno A."/>
            <person name="Muraki A."/>
            <person name="Nakayama S."/>
            <person name="Nakazaki N."/>
            <person name="Shinpo S."/>
            <person name="Takeuchi C."/>
            <person name="Wada T."/>
            <person name="Watanabe A."/>
            <person name="Yamada M."/>
            <person name="Yasuda M."/>
            <person name="Tabata S."/>
        </authorList>
    </citation>
    <scope>NUCLEOTIDE SEQUENCE [LARGE SCALE GENOMIC DNA]</scope>
    <source>
        <strain>cv. Columbia</strain>
    </source>
</reference>
<reference key="2">
    <citation type="journal article" date="2017" name="Plant J.">
        <title>Araport11: a complete reannotation of the Arabidopsis thaliana reference genome.</title>
        <authorList>
            <person name="Cheng C.Y."/>
            <person name="Krishnakumar V."/>
            <person name="Chan A.P."/>
            <person name="Thibaud-Nissen F."/>
            <person name="Schobel S."/>
            <person name="Town C.D."/>
        </authorList>
    </citation>
    <scope>GENOME REANNOTATION</scope>
    <source>
        <strain>cv. Columbia</strain>
    </source>
</reference>
<reference key="3">
    <citation type="submission" date="2004-03" db="EMBL/GenBank/DDBJ databases">
        <title>Arabidopsis ORF clones.</title>
        <authorList>
            <person name="Cheuk R.F."/>
            <person name="Chen H."/>
            <person name="Kim C.J."/>
            <person name="Shinn P."/>
            <person name="Ecker J.R."/>
        </authorList>
    </citation>
    <scope>NUCLEOTIDE SEQUENCE [LARGE SCALE MRNA] (ISOFORM 1)</scope>
    <source>
        <strain>cv. Columbia</strain>
    </source>
</reference>
<reference key="4">
    <citation type="submission" date="2006-07" db="EMBL/GenBank/DDBJ databases">
        <title>Large-scale analysis of RIKEN Arabidopsis full-length (RAFL) cDNAs.</title>
        <authorList>
            <person name="Totoki Y."/>
            <person name="Seki M."/>
            <person name="Ishida J."/>
            <person name="Nakajima M."/>
            <person name="Enju A."/>
            <person name="Kamiya A."/>
            <person name="Narusaka M."/>
            <person name="Shin-i T."/>
            <person name="Nakagawa M."/>
            <person name="Sakamoto N."/>
            <person name="Oishi K."/>
            <person name="Kohara Y."/>
            <person name="Kobayashi M."/>
            <person name="Toyoda A."/>
            <person name="Sakaki Y."/>
            <person name="Sakurai T."/>
            <person name="Iida K."/>
            <person name="Akiyama K."/>
            <person name="Satou M."/>
            <person name="Toyoda T."/>
            <person name="Konagaya A."/>
            <person name="Carninci P."/>
            <person name="Kawai J."/>
            <person name="Hayashizaki Y."/>
            <person name="Shinozaki K."/>
        </authorList>
    </citation>
    <scope>NUCLEOTIDE SEQUENCE [LARGE SCALE MRNA] (ISOFORM 2)</scope>
    <source>
        <strain>cv. Columbia</strain>
    </source>
</reference>
<reference key="5">
    <citation type="journal article" date="2001" name="New Phytol.">
        <title>The CDPK superfamily of protein kinases.</title>
        <authorList>
            <person name="Harmon A.C."/>
            <person name="Gribskov M."/>
            <person name="Gubrium E."/>
            <person name="Harper J.F."/>
        </authorList>
    </citation>
    <scope>GENE FAMILY</scope>
    <scope>NOMENCLATURE</scope>
</reference>
<reference key="6">
    <citation type="journal article" date="2002" name="Plant Physiol.">
        <title>Calcium signaling through protein kinases. The Arabidopsis calcium-dependent protein kinase gene family.</title>
        <authorList>
            <person name="Cheng S.-H."/>
            <person name="Willmann M.R."/>
            <person name="Chen H.-C."/>
            <person name="Sheen J."/>
        </authorList>
    </citation>
    <scope>GENE FAMILY</scope>
    <scope>NOMENCLATURE</scope>
</reference>
<reference key="7">
    <citation type="journal article" date="2003" name="Mol. Cell. Proteomics">
        <title>Large-scale analysis of in vivo phosphorylated membrane proteins by immobilized metal ion affinity chromatography and mass spectrometry.</title>
        <authorList>
            <person name="Nuehse T.S."/>
            <person name="Stensballe A."/>
            <person name="Jensen O.N."/>
            <person name="Peck S.C."/>
        </authorList>
    </citation>
    <scope>IDENTIFICATION BY MASS SPECTROMETRY [LARGE SCALE ANALYSIS]</scope>
    <source>
        <strain>cv. La-0</strain>
    </source>
</reference>
<reference key="8">
    <citation type="journal article" date="2003" name="Plant Physiol.">
        <title>The Arabidopsis CDPK-SnRK superfamily of protein kinases.</title>
        <authorList>
            <person name="Hrabak E.M."/>
            <person name="Chan C.W.M."/>
            <person name="Gribskov M."/>
            <person name="Harper J.F."/>
            <person name="Choi J.H."/>
            <person name="Halford N."/>
            <person name="Kudla J."/>
            <person name="Luan S."/>
            <person name="Nimmo H.G."/>
            <person name="Sussman M.R."/>
            <person name="Thomas M."/>
            <person name="Walker-Simmons K."/>
            <person name="Zhu J.-K."/>
            <person name="Harmon A.C."/>
        </authorList>
    </citation>
    <scope>GENE FAMILY</scope>
    <scope>NOMENCLATURE</scope>
</reference>
<reference key="9">
    <citation type="journal article" date="2004" name="Plant Cell">
        <title>Phosphoproteomics of the Arabidopsis plasma membrane and a new phosphorylation site database.</title>
        <authorList>
            <person name="Nuehse T.S."/>
            <person name="Stensballe A."/>
            <person name="Jensen O.N."/>
            <person name="Peck S.C."/>
        </authorList>
    </citation>
    <scope>IDENTIFICATION BY MASS SPECTROMETRY [LARGE SCALE ANALYSIS]</scope>
</reference>
<reference key="10">
    <citation type="journal article" date="2005" name="Plant Physiol.">
        <title>Arabidopsis calcium-dependent protein kinase AtCPK32 interacts with ABF4, a transcriptional regulator of abscisic acid-responsive gene expression, and modulates its activity.</title>
        <authorList>
            <person name="Choi H.-I."/>
            <person name="Park H.-J."/>
            <person name="Park J.H."/>
            <person name="Kim S."/>
            <person name="Im M.-Y."/>
            <person name="Seo H.-H."/>
            <person name="Kim Y.-W."/>
            <person name="Hwang I."/>
            <person name="Kim S.Y."/>
        </authorList>
    </citation>
    <scope>FUNCTION</scope>
    <scope>TISSUE SPECIFICITY</scope>
    <scope>SUBCELLULAR LOCATION</scope>
    <scope>INDUCTION</scope>
    <scope>INTERACTION WITH ABF4</scope>
</reference>
<reference key="11">
    <citation type="journal article" date="2006" name="J. Plant Physiol.">
        <title>Use of differential display for the identification of touch-induced genes from an ethylene-insensitive Arabidopsis mutant and partial characterization of these genes.</title>
        <authorList>
            <person name="Chotikacharoensuk T."/>
            <person name="Arteca R.N."/>
            <person name="Arteca J.M."/>
        </authorList>
    </citation>
    <scope>INDUCTION</scope>
</reference>
<reference key="12">
    <citation type="journal article" date="2014" name="Mol. Plant">
        <title>A calcium-dependent protein kinase interacts with and activates a calcium channel to regulate pollen tube growth.</title>
        <authorList>
            <person name="Zhou L."/>
            <person name="Lan W."/>
            <person name="Jiang Y."/>
            <person name="Fang W."/>
            <person name="Luan S."/>
        </authorList>
    </citation>
    <scope>FUNCTION</scope>
    <scope>INTERACTION WITH CNGC18</scope>
</reference>
<gene>
    <name evidence="12" type="primary">CPK32</name>
    <name evidence="15" type="ordered locus">At3g57530</name>
    <name evidence="16" type="ORF">T8H10.130</name>
</gene>
<organism>
    <name type="scientific">Arabidopsis thaliana</name>
    <name type="common">Mouse-ear cress</name>
    <dbReference type="NCBI Taxonomy" id="3702"/>
    <lineage>
        <taxon>Eukaryota</taxon>
        <taxon>Viridiplantae</taxon>
        <taxon>Streptophyta</taxon>
        <taxon>Embryophyta</taxon>
        <taxon>Tracheophyta</taxon>
        <taxon>Spermatophyta</taxon>
        <taxon>Magnoliopsida</taxon>
        <taxon>eudicotyledons</taxon>
        <taxon>Gunneridae</taxon>
        <taxon>Pentapetalae</taxon>
        <taxon>rosids</taxon>
        <taxon>malvids</taxon>
        <taxon>Brassicales</taxon>
        <taxon>Brassicaceae</taxon>
        <taxon>Camelineae</taxon>
        <taxon>Arabidopsis</taxon>
    </lineage>
</organism>
<proteinExistence type="evidence at protein level"/>
<dbReference type="EC" id="2.7.11.1" evidence="13"/>
<dbReference type="EMBL" id="AL133248">
    <property type="protein sequence ID" value="CAB66110.1"/>
    <property type="status" value="ALT_SEQ"/>
    <property type="molecule type" value="Genomic_DNA"/>
</dbReference>
<dbReference type="EMBL" id="CP002686">
    <property type="protein sequence ID" value="AEE79668.1"/>
    <property type="molecule type" value="Genomic_DNA"/>
</dbReference>
<dbReference type="EMBL" id="BT011630">
    <property type="protein sequence ID" value="AAS47636.1"/>
    <property type="molecule type" value="mRNA"/>
</dbReference>
<dbReference type="EMBL" id="BT012274">
    <property type="protein sequence ID" value="AAS76761.1"/>
    <property type="molecule type" value="mRNA"/>
</dbReference>
<dbReference type="EMBL" id="AK226348">
    <property type="protein sequence ID" value="BAE98496.1"/>
    <property type="molecule type" value="mRNA"/>
</dbReference>
<dbReference type="PIR" id="T46189">
    <property type="entry name" value="T46189"/>
</dbReference>
<dbReference type="RefSeq" id="NP_191312.2">
    <molecule id="Q6NLQ6-1"/>
    <property type="nucleotide sequence ID" value="NM_115613.4"/>
</dbReference>
<dbReference type="SMR" id="Q6NLQ6"/>
<dbReference type="BioGRID" id="10236">
    <property type="interactions" value="8"/>
</dbReference>
<dbReference type="FunCoup" id="Q6NLQ6">
    <property type="interactions" value="2212"/>
</dbReference>
<dbReference type="IntAct" id="Q6NLQ6">
    <property type="interactions" value="7"/>
</dbReference>
<dbReference type="STRING" id="3702.Q6NLQ6"/>
<dbReference type="iPTMnet" id="Q6NLQ6"/>
<dbReference type="SwissPalm" id="Q6NLQ6"/>
<dbReference type="PaxDb" id="3702-AT3G57530.1"/>
<dbReference type="ProteomicsDB" id="220601">
    <molecule id="Q6NLQ6-1"/>
</dbReference>
<dbReference type="EnsemblPlants" id="AT3G57530.1">
    <molecule id="Q6NLQ6-1"/>
    <property type="protein sequence ID" value="AT3G57530.1"/>
    <property type="gene ID" value="AT3G57530"/>
</dbReference>
<dbReference type="GeneID" id="824920"/>
<dbReference type="Gramene" id="AT3G57530.1">
    <molecule id="Q6NLQ6-1"/>
    <property type="protein sequence ID" value="AT3G57530.1"/>
    <property type="gene ID" value="AT3G57530"/>
</dbReference>
<dbReference type="KEGG" id="ath:AT3G57530"/>
<dbReference type="Araport" id="AT3G57530"/>
<dbReference type="TAIR" id="AT3G57530">
    <property type="gene designation" value="CPK32"/>
</dbReference>
<dbReference type="eggNOG" id="KOG0032">
    <property type="taxonomic scope" value="Eukaryota"/>
</dbReference>
<dbReference type="HOGENOM" id="CLU_000288_37_3_1"/>
<dbReference type="InParanoid" id="Q6NLQ6"/>
<dbReference type="PhylomeDB" id="Q6NLQ6"/>
<dbReference type="PRO" id="PR:Q6NLQ6"/>
<dbReference type="Proteomes" id="UP000006548">
    <property type="component" value="Chromosome 3"/>
</dbReference>
<dbReference type="ExpressionAtlas" id="Q6NLQ6">
    <property type="expression patterns" value="baseline and differential"/>
</dbReference>
<dbReference type="GO" id="GO:0005737">
    <property type="term" value="C:cytoplasm"/>
    <property type="evidence" value="ECO:0000314"/>
    <property type="project" value="TAIR"/>
</dbReference>
<dbReference type="GO" id="GO:0005829">
    <property type="term" value="C:cytosol"/>
    <property type="evidence" value="ECO:0007005"/>
    <property type="project" value="TAIR"/>
</dbReference>
<dbReference type="GO" id="GO:0005634">
    <property type="term" value="C:nucleus"/>
    <property type="evidence" value="ECO:0000314"/>
    <property type="project" value="TAIR"/>
</dbReference>
<dbReference type="GO" id="GO:0005886">
    <property type="term" value="C:plasma membrane"/>
    <property type="evidence" value="ECO:0007005"/>
    <property type="project" value="TAIR"/>
</dbReference>
<dbReference type="GO" id="GO:0009506">
    <property type="term" value="C:plasmodesma"/>
    <property type="evidence" value="ECO:0007005"/>
    <property type="project" value="TAIR"/>
</dbReference>
<dbReference type="GO" id="GO:0005524">
    <property type="term" value="F:ATP binding"/>
    <property type="evidence" value="ECO:0007669"/>
    <property type="project" value="UniProtKB-KW"/>
</dbReference>
<dbReference type="GO" id="GO:0005509">
    <property type="term" value="F:calcium ion binding"/>
    <property type="evidence" value="ECO:0007669"/>
    <property type="project" value="InterPro"/>
</dbReference>
<dbReference type="GO" id="GO:0004698">
    <property type="term" value="F:calcium,diacylglycerol-dependent serine/threonine kinase activity"/>
    <property type="evidence" value="ECO:0000314"/>
    <property type="project" value="TAIR"/>
</dbReference>
<dbReference type="GO" id="GO:0106310">
    <property type="term" value="F:protein serine kinase activity"/>
    <property type="evidence" value="ECO:0007669"/>
    <property type="project" value="RHEA"/>
</dbReference>
<dbReference type="GO" id="GO:0009738">
    <property type="term" value="P:abscisic acid-activated signaling pathway"/>
    <property type="evidence" value="ECO:0000315"/>
    <property type="project" value="TAIR"/>
</dbReference>
<dbReference type="GO" id="GO:0009651">
    <property type="term" value="P:response to salt stress"/>
    <property type="evidence" value="ECO:0000270"/>
    <property type="project" value="TAIR"/>
</dbReference>
<dbReference type="CDD" id="cd00051">
    <property type="entry name" value="EFh"/>
    <property type="match status" value="1"/>
</dbReference>
<dbReference type="CDD" id="cd05117">
    <property type="entry name" value="STKc_CAMK"/>
    <property type="match status" value="1"/>
</dbReference>
<dbReference type="FunFam" id="3.30.200.20:FF:000004">
    <property type="entry name" value="Calcium-dependent protein kinase 1"/>
    <property type="match status" value="1"/>
</dbReference>
<dbReference type="FunFam" id="1.10.510.10:FF:000067">
    <property type="entry name" value="calcium-dependent protein kinase 13"/>
    <property type="match status" value="1"/>
</dbReference>
<dbReference type="FunFam" id="1.10.238.10:FF:000050">
    <property type="entry name" value="Calcium-dependent protein kinase 7"/>
    <property type="match status" value="1"/>
</dbReference>
<dbReference type="Gene3D" id="1.10.238.10">
    <property type="entry name" value="EF-hand"/>
    <property type="match status" value="1"/>
</dbReference>
<dbReference type="Gene3D" id="3.30.200.20">
    <property type="entry name" value="Phosphorylase Kinase, domain 1"/>
    <property type="match status" value="1"/>
</dbReference>
<dbReference type="Gene3D" id="1.10.510.10">
    <property type="entry name" value="Transferase(Phosphotransferase) domain 1"/>
    <property type="match status" value="1"/>
</dbReference>
<dbReference type="InterPro" id="IPR050205">
    <property type="entry name" value="CDPK_Ser/Thr_kinases"/>
</dbReference>
<dbReference type="InterPro" id="IPR011992">
    <property type="entry name" value="EF-hand-dom_pair"/>
</dbReference>
<dbReference type="InterPro" id="IPR018247">
    <property type="entry name" value="EF_Hand_1_Ca_BS"/>
</dbReference>
<dbReference type="InterPro" id="IPR002048">
    <property type="entry name" value="EF_hand_dom"/>
</dbReference>
<dbReference type="InterPro" id="IPR011009">
    <property type="entry name" value="Kinase-like_dom_sf"/>
</dbReference>
<dbReference type="InterPro" id="IPR000719">
    <property type="entry name" value="Prot_kinase_dom"/>
</dbReference>
<dbReference type="InterPro" id="IPR017441">
    <property type="entry name" value="Protein_kinase_ATP_BS"/>
</dbReference>
<dbReference type="InterPro" id="IPR008271">
    <property type="entry name" value="Ser/Thr_kinase_AS"/>
</dbReference>
<dbReference type="PANTHER" id="PTHR24349">
    <property type="entry name" value="SERINE/THREONINE-PROTEIN KINASE"/>
    <property type="match status" value="1"/>
</dbReference>
<dbReference type="Pfam" id="PF13499">
    <property type="entry name" value="EF-hand_7"/>
    <property type="match status" value="2"/>
</dbReference>
<dbReference type="Pfam" id="PF00069">
    <property type="entry name" value="Pkinase"/>
    <property type="match status" value="1"/>
</dbReference>
<dbReference type="SMART" id="SM00054">
    <property type="entry name" value="EFh"/>
    <property type="match status" value="4"/>
</dbReference>
<dbReference type="SMART" id="SM00220">
    <property type="entry name" value="S_TKc"/>
    <property type="match status" value="1"/>
</dbReference>
<dbReference type="SUPFAM" id="SSF47473">
    <property type="entry name" value="EF-hand"/>
    <property type="match status" value="1"/>
</dbReference>
<dbReference type="SUPFAM" id="SSF56112">
    <property type="entry name" value="Protein kinase-like (PK-like)"/>
    <property type="match status" value="1"/>
</dbReference>
<dbReference type="PROSITE" id="PS00018">
    <property type="entry name" value="EF_HAND_1"/>
    <property type="match status" value="3"/>
</dbReference>
<dbReference type="PROSITE" id="PS50222">
    <property type="entry name" value="EF_HAND_2"/>
    <property type="match status" value="4"/>
</dbReference>
<dbReference type="PROSITE" id="PS00107">
    <property type="entry name" value="PROTEIN_KINASE_ATP"/>
    <property type="match status" value="1"/>
</dbReference>
<dbReference type="PROSITE" id="PS50011">
    <property type="entry name" value="PROTEIN_KINASE_DOM"/>
    <property type="match status" value="1"/>
</dbReference>
<dbReference type="PROSITE" id="PS00108">
    <property type="entry name" value="PROTEIN_KINASE_ST"/>
    <property type="match status" value="1"/>
</dbReference>
<accession>Q6NLQ6</accession>
<accession>Q0WWK2</accession>
<accession>Q9SCM0</accession>